<dbReference type="PIR" id="A32038">
    <property type="entry name" value="A32038"/>
</dbReference>
<dbReference type="PDB" id="1EIT">
    <property type="method" value="NMR"/>
    <property type="chains" value="A=1-36"/>
</dbReference>
<dbReference type="PDBsum" id="1EIT"/>
<dbReference type="SMR" id="P11057"/>
<dbReference type="ArachnoServer" id="AS000375">
    <property type="toxin name" value="mu-agatoxin-Aa1a"/>
</dbReference>
<dbReference type="EvolutionaryTrace" id="P11057"/>
<dbReference type="GO" id="GO:0005576">
    <property type="term" value="C:extracellular region"/>
    <property type="evidence" value="ECO:0007669"/>
    <property type="project" value="UniProtKB-SubCell"/>
</dbReference>
<dbReference type="GO" id="GO:0044231">
    <property type="term" value="C:host cell presynaptic membrane"/>
    <property type="evidence" value="ECO:0007669"/>
    <property type="project" value="UniProtKB-KW"/>
</dbReference>
<dbReference type="GO" id="GO:0017080">
    <property type="term" value="F:sodium channel regulator activity"/>
    <property type="evidence" value="ECO:0007669"/>
    <property type="project" value="UniProtKB-KW"/>
</dbReference>
<dbReference type="GO" id="GO:0090729">
    <property type="term" value="F:toxin activity"/>
    <property type="evidence" value="ECO:0007669"/>
    <property type="project" value="UniProtKB-KW"/>
</dbReference>
<dbReference type="InterPro" id="IPR016328">
    <property type="entry name" value="Beta/delta-agatoxin_fam"/>
</dbReference>
<dbReference type="Pfam" id="PF05980">
    <property type="entry name" value="Toxin_7"/>
    <property type="match status" value="1"/>
</dbReference>
<dbReference type="PIRSF" id="PIRSF001882">
    <property type="entry name" value="Curtatoxin"/>
    <property type="match status" value="1"/>
</dbReference>
<dbReference type="SUPFAM" id="SSF57059">
    <property type="entry name" value="omega toxin-like"/>
    <property type="match status" value="1"/>
</dbReference>
<dbReference type="PROSITE" id="PS60015">
    <property type="entry name" value="MU_AGATOXIN"/>
    <property type="match status" value="1"/>
</dbReference>
<evidence type="ECO:0000269" key="1">
    <source>
    </source>
</evidence>
<evidence type="ECO:0000269" key="2">
    <source>
    </source>
</evidence>
<evidence type="ECO:0000303" key="3">
    <source>
    </source>
</evidence>
<evidence type="ECO:0000305" key="4"/>
<evidence type="ECO:0000305" key="5">
    <source>
    </source>
</evidence>
<evidence type="ECO:0007829" key="6">
    <source>
        <dbReference type="PDB" id="1EIT"/>
    </source>
</evidence>
<name>T5G1A_AGEAP</name>
<accession>P11057</accession>
<protein>
    <recommendedName>
        <fullName>Mu-agatoxin-Aa1a</fullName>
        <shortName>Mu-AGTX-Aa1a</shortName>
    </recommendedName>
    <alternativeName>
        <fullName evidence="3">Mu-agatoxin I</fullName>
    </alternativeName>
    <alternativeName>
        <fullName>Mu-agatoxin-1</fullName>
    </alternativeName>
</protein>
<comment type="function">
    <text evidence="1">Insecticidal neurotoxin that induces an irreversible spastic paralysis when injected into insects. Modifies presynaptic voltage-gated sodium channels (Nav), causing them to open at the normal resting potential of the nerve. This leads to spontaneous release of neurotransmitter and repetitive action potentials in motor neurons.</text>
</comment>
<comment type="subcellular location">
    <subcellularLocation>
        <location evidence="1">Secreted</location>
    </subcellularLocation>
</comment>
<comment type="tissue specificity">
    <text evidence="5">Expressed by the venom gland.</text>
</comment>
<comment type="domain">
    <text>The presence of a 'disulfide through disulfide knot' structurally defines this protein as a knottin.</text>
</comment>
<comment type="toxic dose">
    <text evidence="1">LD(50) is 28 +-7 mg/kg into third stadium larvae of M.sexta.</text>
</comment>
<comment type="similarity">
    <text evidence="4">Belongs to the neurotoxin 07 (Beta/delta-agtx) family. 04 (aga-5) subfamily.</text>
</comment>
<sequence>ECVPENGHCRDWYDECCEGFYCSCRQPPKCICRNNN</sequence>
<proteinExistence type="evidence at protein level"/>
<feature type="peptide" id="PRO_0000044952" description="Mu-agatoxin-Aa1a">
    <location>
        <begin position="1"/>
        <end position="36"/>
    </location>
</feature>
<feature type="modified residue" description="Asparagine amide" evidence="1 2">
    <location>
        <position position="36"/>
    </location>
</feature>
<feature type="disulfide bond" evidence="2">
    <location>
        <begin position="2"/>
        <end position="17"/>
    </location>
</feature>
<feature type="disulfide bond" evidence="2">
    <location>
        <begin position="9"/>
        <end position="22"/>
    </location>
</feature>
<feature type="disulfide bond" evidence="2">
    <location>
        <begin position="16"/>
        <end position="32"/>
    </location>
</feature>
<feature type="disulfide bond" evidence="2">
    <location>
        <begin position="24"/>
        <end position="30"/>
    </location>
</feature>
<feature type="strand" evidence="6">
    <location>
        <begin position="11"/>
        <end position="14"/>
    </location>
</feature>
<feature type="strand" evidence="6">
    <location>
        <begin position="20"/>
        <end position="26"/>
    </location>
</feature>
<feature type="strand" evidence="6">
    <location>
        <begin position="29"/>
        <end position="34"/>
    </location>
</feature>
<organism>
    <name type="scientific">Agelenopsis aperta</name>
    <name type="common">North American funnel-web spider</name>
    <name type="synonym">Agelenopsis gertschi</name>
    <dbReference type="NCBI Taxonomy" id="6908"/>
    <lineage>
        <taxon>Eukaryota</taxon>
        <taxon>Metazoa</taxon>
        <taxon>Ecdysozoa</taxon>
        <taxon>Arthropoda</taxon>
        <taxon>Chelicerata</taxon>
        <taxon>Arachnida</taxon>
        <taxon>Araneae</taxon>
        <taxon>Araneomorphae</taxon>
        <taxon>Entelegynae</taxon>
        <taxon>Agelenidae</taxon>
        <taxon>Agelenopsis</taxon>
    </lineage>
</organism>
<keyword id="KW-0002">3D-structure</keyword>
<keyword id="KW-0027">Amidation</keyword>
<keyword id="KW-0903">Direct protein sequencing</keyword>
<keyword id="KW-1015">Disulfide bond</keyword>
<keyword id="KW-0872">Ion channel impairing toxin</keyword>
<keyword id="KW-0960">Knottin</keyword>
<keyword id="KW-0528">Neurotoxin</keyword>
<keyword id="KW-0638">Presynaptic neurotoxin</keyword>
<keyword id="KW-0964">Secreted</keyword>
<keyword id="KW-0800">Toxin</keyword>
<keyword id="KW-0738">Voltage-gated sodium channel impairing toxin</keyword>
<reference key="1">
    <citation type="journal article" date="1989" name="J. Biol. Chem.">
        <title>Purification and characterization of two classes of neurotoxins from the funnel web spider, Agelenopsis aperta.</title>
        <authorList>
            <person name="Skinner W.S."/>
            <person name="Adams M.E."/>
            <person name="Quistad G.B."/>
            <person name="Kataoka H."/>
            <person name="Cesarin B.J."/>
            <person name="Enderlin F.E."/>
            <person name="Schooley D.A."/>
        </authorList>
    </citation>
    <scope>PROTEIN SEQUENCE</scope>
    <scope>FUNCTION</scope>
    <scope>SUBCELLULAR LOCATION</scope>
    <scope>TOXIC DOSE</scope>
    <source>
        <tissue>Venom</tissue>
    </source>
</reference>
<reference key="2">
    <citation type="journal article" date="1996" name="Biochemistry">
        <title>Three-dimensional structure analysis of mu-agatoxins: further evidence for common motifs among neurotoxins with diverse ion channel specificities.</title>
        <authorList>
            <person name="Omecinsky D.O."/>
            <person name="Holub K.E."/>
            <person name="Adams M.E."/>
            <person name="Reily M.D."/>
        </authorList>
    </citation>
    <scope>STRUCTURE BY NMR</scope>
    <scope>AMIDATION AT ASN-36</scope>
    <scope>DISULFIDE BONDS</scope>
</reference>
<reference key="3">
    <citation type="journal article" date="2004" name="Toxicon">
        <title>Agatoxins: ion channel specific toxins from the American funnel web spider, Agelenopsis aperta.</title>
        <authorList>
            <person name="Adams M.E."/>
        </authorList>
    </citation>
    <scope>REVIEW</scope>
</reference>